<evidence type="ECO:0000255" key="1">
    <source>
        <dbReference type="HAMAP-Rule" id="MF_00102"/>
    </source>
</evidence>
<evidence type="ECO:0000305" key="2"/>
<feature type="chain" id="PRO_1000057679" description="4-hydroxy-tetrahydrodipicolinate reductase">
    <location>
        <begin position="1"/>
        <end position="267"/>
    </location>
</feature>
<feature type="active site" description="Proton donor/acceptor" evidence="1">
    <location>
        <position position="156"/>
    </location>
</feature>
<feature type="active site" description="Proton donor" evidence="1">
    <location>
        <position position="160"/>
    </location>
</feature>
<feature type="binding site" evidence="1">
    <location>
        <begin position="12"/>
        <end position="17"/>
    </location>
    <ligand>
        <name>NAD(+)</name>
        <dbReference type="ChEBI" id="CHEBI:57540"/>
    </ligand>
</feature>
<feature type="binding site" evidence="1">
    <location>
        <position position="38"/>
    </location>
    <ligand>
        <name>NAD(+)</name>
        <dbReference type="ChEBI" id="CHEBI:57540"/>
    </ligand>
</feature>
<feature type="binding site" evidence="1">
    <location>
        <begin position="100"/>
        <end position="102"/>
    </location>
    <ligand>
        <name>NAD(+)</name>
        <dbReference type="ChEBI" id="CHEBI:57540"/>
    </ligand>
</feature>
<feature type="binding site" evidence="1">
    <location>
        <begin position="126"/>
        <end position="129"/>
    </location>
    <ligand>
        <name>NAD(+)</name>
        <dbReference type="ChEBI" id="CHEBI:57540"/>
    </ligand>
</feature>
<feature type="binding site" evidence="1">
    <location>
        <position position="157"/>
    </location>
    <ligand>
        <name>(S)-2,3,4,5-tetrahydrodipicolinate</name>
        <dbReference type="ChEBI" id="CHEBI:16845"/>
    </ligand>
</feature>
<feature type="binding site" evidence="1">
    <location>
        <begin position="166"/>
        <end position="167"/>
    </location>
    <ligand>
        <name>(S)-2,3,4,5-tetrahydrodipicolinate</name>
        <dbReference type="ChEBI" id="CHEBI:16845"/>
    </ligand>
</feature>
<dbReference type="EC" id="1.17.1.8" evidence="1"/>
<dbReference type="EMBL" id="CP000813">
    <property type="protein sequence ID" value="ABV62650.1"/>
    <property type="molecule type" value="Genomic_DNA"/>
</dbReference>
<dbReference type="RefSeq" id="WP_012010364.1">
    <property type="nucleotide sequence ID" value="NZ_VEIS01000015.1"/>
</dbReference>
<dbReference type="SMR" id="A8FEI3"/>
<dbReference type="STRING" id="315750.BPUM_1980"/>
<dbReference type="GeneID" id="5621246"/>
<dbReference type="KEGG" id="bpu:BPUM_1980"/>
<dbReference type="eggNOG" id="COG0289">
    <property type="taxonomic scope" value="Bacteria"/>
</dbReference>
<dbReference type="HOGENOM" id="CLU_047479_0_1_9"/>
<dbReference type="OrthoDB" id="9790352at2"/>
<dbReference type="UniPathway" id="UPA00034">
    <property type="reaction ID" value="UER00018"/>
</dbReference>
<dbReference type="Proteomes" id="UP000001355">
    <property type="component" value="Chromosome"/>
</dbReference>
<dbReference type="GO" id="GO:0005829">
    <property type="term" value="C:cytosol"/>
    <property type="evidence" value="ECO:0007669"/>
    <property type="project" value="TreeGrafter"/>
</dbReference>
<dbReference type="GO" id="GO:0008839">
    <property type="term" value="F:4-hydroxy-tetrahydrodipicolinate reductase"/>
    <property type="evidence" value="ECO:0007669"/>
    <property type="project" value="UniProtKB-EC"/>
</dbReference>
<dbReference type="GO" id="GO:0051287">
    <property type="term" value="F:NAD binding"/>
    <property type="evidence" value="ECO:0007669"/>
    <property type="project" value="UniProtKB-UniRule"/>
</dbReference>
<dbReference type="GO" id="GO:0050661">
    <property type="term" value="F:NADP binding"/>
    <property type="evidence" value="ECO:0007669"/>
    <property type="project" value="UniProtKB-UniRule"/>
</dbReference>
<dbReference type="GO" id="GO:0016726">
    <property type="term" value="F:oxidoreductase activity, acting on CH or CH2 groups, NAD or NADP as acceptor"/>
    <property type="evidence" value="ECO:0007669"/>
    <property type="project" value="UniProtKB-UniRule"/>
</dbReference>
<dbReference type="GO" id="GO:0019877">
    <property type="term" value="P:diaminopimelate biosynthetic process"/>
    <property type="evidence" value="ECO:0007669"/>
    <property type="project" value="UniProtKB-UniRule"/>
</dbReference>
<dbReference type="GO" id="GO:0009089">
    <property type="term" value="P:lysine biosynthetic process via diaminopimelate"/>
    <property type="evidence" value="ECO:0007669"/>
    <property type="project" value="UniProtKB-UniRule"/>
</dbReference>
<dbReference type="CDD" id="cd02274">
    <property type="entry name" value="DHDPR_N"/>
    <property type="match status" value="1"/>
</dbReference>
<dbReference type="FunFam" id="3.30.360.10:FF:000009">
    <property type="entry name" value="4-hydroxy-tetrahydrodipicolinate reductase"/>
    <property type="match status" value="1"/>
</dbReference>
<dbReference type="FunFam" id="3.40.50.720:FF:000180">
    <property type="entry name" value="4-hydroxy-tetrahydrodipicolinate reductase"/>
    <property type="match status" value="1"/>
</dbReference>
<dbReference type="Gene3D" id="3.30.360.10">
    <property type="entry name" value="Dihydrodipicolinate Reductase, domain 2"/>
    <property type="match status" value="1"/>
</dbReference>
<dbReference type="Gene3D" id="3.40.50.720">
    <property type="entry name" value="NAD(P)-binding Rossmann-like Domain"/>
    <property type="match status" value="1"/>
</dbReference>
<dbReference type="HAMAP" id="MF_00102">
    <property type="entry name" value="DapB"/>
    <property type="match status" value="1"/>
</dbReference>
<dbReference type="InterPro" id="IPR022663">
    <property type="entry name" value="DapB_C"/>
</dbReference>
<dbReference type="InterPro" id="IPR000846">
    <property type="entry name" value="DapB_N"/>
</dbReference>
<dbReference type="InterPro" id="IPR022664">
    <property type="entry name" value="DapB_N_CS"/>
</dbReference>
<dbReference type="InterPro" id="IPR023940">
    <property type="entry name" value="DHDPR_bac"/>
</dbReference>
<dbReference type="InterPro" id="IPR036291">
    <property type="entry name" value="NAD(P)-bd_dom_sf"/>
</dbReference>
<dbReference type="NCBIfam" id="TIGR00036">
    <property type="entry name" value="dapB"/>
    <property type="match status" value="1"/>
</dbReference>
<dbReference type="PANTHER" id="PTHR20836:SF0">
    <property type="entry name" value="4-HYDROXY-TETRAHYDRODIPICOLINATE REDUCTASE 1, CHLOROPLASTIC-RELATED"/>
    <property type="match status" value="1"/>
</dbReference>
<dbReference type="PANTHER" id="PTHR20836">
    <property type="entry name" value="DIHYDRODIPICOLINATE REDUCTASE"/>
    <property type="match status" value="1"/>
</dbReference>
<dbReference type="Pfam" id="PF05173">
    <property type="entry name" value="DapB_C"/>
    <property type="match status" value="1"/>
</dbReference>
<dbReference type="Pfam" id="PF01113">
    <property type="entry name" value="DapB_N"/>
    <property type="match status" value="1"/>
</dbReference>
<dbReference type="PIRSF" id="PIRSF000161">
    <property type="entry name" value="DHPR"/>
    <property type="match status" value="1"/>
</dbReference>
<dbReference type="SUPFAM" id="SSF55347">
    <property type="entry name" value="Glyceraldehyde-3-phosphate dehydrogenase-like, C-terminal domain"/>
    <property type="match status" value="1"/>
</dbReference>
<dbReference type="SUPFAM" id="SSF51735">
    <property type="entry name" value="NAD(P)-binding Rossmann-fold domains"/>
    <property type="match status" value="1"/>
</dbReference>
<dbReference type="PROSITE" id="PS01298">
    <property type="entry name" value="DAPB"/>
    <property type="match status" value="1"/>
</dbReference>
<reference key="1">
    <citation type="journal article" date="2007" name="PLoS ONE">
        <title>Paradoxical DNA repair and peroxide resistance gene conservation in Bacillus pumilus SAFR-032.</title>
        <authorList>
            <person name="Gioia J."/>
            <person name="Yerrapragada S."/>
            <person name="Qin X."/>
            <person name="Jiang H."/>
            <person name="Igboeli O.C."/>
            <person name="Muzny D."/>
            <person name="Dugan-Rocha S."/>
            <person name="Ding Y."/>
            <person name="Hawes A."/>
            <person name="Liu W."/>
            <person name="Perez L."/>
            <person name="Kovar C."/>
            <person name="Dinh H."/>
            <person name="Lee S."/>
            <person name="Nazareth L."/>
            <person name="Blyth P."/>
            <person name="Holder M."/>
            <person name="Buhay C."/>
            <person name="Tirumalai M.R."/>
            <person name="Liu Y."/>
            <person name="Dasgupta I."/>
            <person name="Bokhetache L."/>
            <person name="Fujita M."/>
            <person name="Karouia F."/>
            <person name="Eswara Moorthy P."/>
            <person name="Siefert J."/>
            <person name="Uzman A."/>
            <person name="Buzumbo P."/>
            <person name="Verma A."/>
            <person name="Zwiya H."/>
            <person name="McWilliams B.D."/>
            <person name="Olowu A."/>
            <person name="Clinkenbeard K.D."/>
            <person name="Newcombe D."/>
            <person name="Golebiewski L."/>
            <person name="Petrosino J.F."/>
            <person name="Nicholson W.L."/>
            <person name="Fox G.E."/>
            <person name="Venkateswaran K."/>
            <person name="Highlander S.K."/>
            <person name="Weinstock G.M."/>
        </authorList>
    </citation>
    <scope>NUCLEOTIDE SEQUENCE [LARGE SCALE GENOMIC DNA]</scope>
    <source>
        <strain>SAFR-032</strain>
    </source>
</reference>
<name>DAPB_BACP2</name>
<comment type="function">
    <text evidence="1">Catalyzes the conversion of 4-hydroxy-tetrahydrodipicolinate (HTPA) to tetrahydrodipicolinate.</text>
</comment>
<comment type="catalytic activity">
    <reaction evidence="1">
        <text>(S)-2,3,4,5-tetrahydrodipicolinate + NAD(+) + H2O = (2S,4S)-4-hydroxy-2,3,4,5-tetrahydrodipicolinate + NADH + H(+)</text>
        <dbReference type="Rhea" id="RHEA:35323"/>
        <dbReference type="ChEBI" id="CHEBI:15377"/>
        <dbReference type="ChEBI" id="CHEBI:15378"/>
        <dbReference type="ChEBI" id="CHEBI:16845"/>
        <dbReference type="ChEBI" id="CHEBI:57540"/>
        <dbReference type="ChEBI" id="CHEBI:57945"/>
        <dbReference type="ChEBI" id="CHEBI:67139"/>
        <dbReference type="EC" id="1.17.1.8"/>
    </reaction>
</comment>
<comment type="catalytic activity">
    <reaction evidence="1">
        <text>(S)-2,3,4,5-tetrahydrodipicolinate + NADP(+) + H2O = (2S,4S)-4-hydroxy-2,3,4,5-tetrahydrodipicolinate + NADPH + H(+)</text>
        <dbReference type="Rhea" id="RHEA:35331"/>
        <dbReference type="ChEBI" id="CHEBI:15377"/>
        <dbReference type="ChEBI" id="CHEBI:15378"/>
        <dbReference type="ChEBI" id="CHEBI:16845"/>
        <dbReference type="ChEBI" id="CHEBI:57783"/>
        <dbReference type="ChEBI" id="CHEBI:58349"/>
        <dbReference type="ChEBI" id="CHEBI:67139"/>
        <dbReference type="EC" id="1.17.1.8"/>
    </reaction>
</comment>
<comment type="pathway">
    <text evidence="1">Amino-acid biosynthesis; L-lysine biosynthesis via DAP pathway; (S)-tetrahydrodipicolinate from L-aspartate: step 4/4.</text>
</comment>
<comment type="subcellular location">
    <subcellularLocation>
        <location evidence="1">Cytoplasm</location>
    </subcellularLocation>
</comment>
<comment type="similarity">
    <text evidence="1">Belongs to the DapB family.</text>
</comment>
<comment type="caution">
    <text evidence="2">Was originally thought to be a dihydrodipicolinate reductase (DHDPR), catalyzing the conversion of dihydrodipicolinate to tetrahydrodipicolinate. However, it was shown in E.coli that the substrate of the enzymatic reaction is not dihydrodipicolinate (DHDP) but in fact (2S,4S)-4-hydroxy-2,3,4,5-tetrahydrodipicolinic acid (HTPA), the product released by the DapA-catalyzed reaction.</text>
</comment>
<gene>
    <name evidence="1" type="primary">dapB</name>
    <name type="ordered locus">BPUM_1980</name>
</gene>
<keyword id="KW-0028">Amino-acid biosynthesis</keyword>
<keyword id="KW-0963">Cytoplasm</keyword>
<keyword id="KW-0220">Diaminopimelate biosynthesis</keyword>
<keyword id="KW-0457">Lysine biosynthesis</keyword>
<keyword id="KW-0520">NAD</keyword>
<keyword id="KW-0521">NADP</keyword>
<keyword id="KW-0560">Oxidoreductase</keyword>
<protein>
    <recommendedName>
        <fullName evidence="1">4-hydroxy-tetrahydrodipicolinate reductase</fullName>
        <shortName evidence="1">HTPA reductase</shortName>
        <ecNumber evidence="1">1.17.1.8</ecNumber>
    </recommendedName>
</protein>
<accession>A8FEI3</accession>
<organism>
    <name type="scientific">Bacillus pumilus (strain SAFR-032)</name>
    <dbReference type="NCBI Taxonomy" id="315750"/>
    <lineage>
        <taxon>Bacteria</taxon>
        <taxon>Bacillati</taxon>
        <taxon>Bacillota</taxon>
        <taxon>Bacilli</taxon>
        <taxon>Bacillales</taxon>
        <taxon>Bacillaceae</taxon>
        <taxon>Bacillus</taxon>
    </lineage>
</organism>
<sequence>MTNQTIKVVIAGARGRMGIEAVKLAEETSHFELVAALDHAHEGKKLSDVIHTTSEAPIYTDIDVCLSETAPDVLIDLTTPEIGKVHTKKALEHGVRPVVGTTGFSEADLKELQQLTEEKGIGCIIAPNFAVGAVLMMKFAKMAANYFPDVEIIELHHDKKLDAPSGTGLKTAEMIAEVRESKKQGHPDEKELIEGARGADYDGIRLHSVRLPGMIAHQEVLFGMDGQTLTIRHDSYNRASFMSGVKLSVEQVMHIDQLVYGLENIID</sequence>
<proteinExistence type="inferred from homology"/>